<reference key="1">
    <citation type="journal article" date="2004" name="Genome Res.">
        <title>The status, quality, and expansion of the NIH full-length cDNA project: the Mammalian Gene Collection (MGC).</title>
        <authorList>
            <consortium name="The MGC Project Team"/>
        </authorList>
    </citation>
    <scope>NUCLEOTIDE SEQUENCE [LARGE SCALE MRNA]</scope>
    <source>
        <strain>C57BL/6J</strain>
        <tissue>Eye</tissue>
        <tissue>Mammary gland</tissue>
    </source>
</reference>
<reference key="2">
    <citation type="journal article" date="2010" name="Cell">
        <title>A tissue-specific atlas of mouse protein phosphorylation and expression.</title>
        <authorList>
            <person name="Huttlin E.L."/>
            <person name="Jedrychowski M.P."/>
            <person name="Elias J.E."/>
            <person name="Goswami T."/>
            <person name="Rad R."/>
            <person name="Beausoleil S.A."/>
            <person name="Villen J."/>
            <person name="Haas W."/>
            <person name="Sowa M.E."/>
            <person name="Gygi S.P."/>
        </authorList>
    </citation>
    <scope>IDENTIFICATION BY MASS SPECTROMETRY [LARGE SCALE ANALYSIS]</scope>
    <source>
        <tissue>Heart</tissue>
        <tissue>Lung</tissue>
    </source>
</reference>
<sequence length="487" mass="53184">MVAGRSRARSPGSWLFPGLWLLAVGGPGSLLQAQEQPSCKKAFDLYFVLDKSGSVANNWIEIYNFVHQLTERFVSPEMRLSFIVFSSQATIILPLTGDRYKIGKGLEDLKAVKPVGETYIHEGLKLANEQIQNAGGLKASSIIIALTDGKLDGLVPSYAENEAKKSRSLGASVYCVGVLDFEQAQLERIADSKDQVFPVKGGFQALKGIINSILAQSCTEILELSPSSVCVGEKFQVVLTGRAVTSISHDGSVLCTFTANSTYTKSEKPVSIQPSSILCPAPVLNKDGETLEVSISYNDGKSAVSRSLTITATECTNGIAAIVAILVLLLLLGAALMWWFWPLCCKVVIKDPPPPPSAPMEEEEEDPLPNKKWPTVDASYYGGRGVGGIKRMEVRWGDKGSTEEGARLEKAKNAVVMVPEEEIPIPSRPPRPRPTHQAPQTKWYTPIKGRLDALWALIMKQYDRVSLMRPQEGDEGRCINFSRVPHQ</sequence>
<dbReference type="EMBL" id="BC003908">
    <property type="protein sequence ID" value="AAH03908.1"/>
    <property type="molecule type" value="mRNA"/>
</dbReference>
<dbReference type="EMBL" id="BC076595">
    <property type="protein sequence ID" value="AAH76595.1"/>
    <property type="molecule type" value="mRNA"/>
</dbReference>
<dbReference type="CCDS" id="CCDS39177.1"/>
<dbReference type="RefSeq" id="NP_598499.1">
    <property type="nucleotide sequence ID" value="NM_133738.3"/>
</dbReference>
<dbReference type="SMR" id="Q6DFX2"/>
<dbReference type="BioGRID" id="215027">
    <property type="interactions" value="3"/>
</dbReference>
<dbReference type="FunCoup" id="Q6DFX2">
    <property type="interactions" value="299"/>
</dbReference>
<dbReference type="STRING" id="10090.ENSMUSP00000031281"/>
<dbReference type="GlyCosmos" id="Q6DFX2">
    <property type="glycosylation" value="1 site, No reported glycans"/>
</dbReference>
<dbReference type="GlyGen" id="Q6DFX2">
    <property type="glycosylation" value="1 site, 1 N-linked glycan (1 site)"/>
</dbReference>
<dbReference type="iPTMnet" id="Q6DFX2"/>
<dbReference type="PhosphoSitePlus" id="Q6DFX2"/>
<dbReference type="SwissPalm" id="Q6DFX2"/>
<dbReference type="PaxDb" id="10090-ENSMUSP00000031281"/>
<dbReference type="ProteomicsDB" id="282125"/>
<dbReference type="Pumba" id="Q6DFX2"/>
<dbReference type="Antibodypedia" id="24968">
    <property type="antibodies" value="187 antibodies from 33 providers"/>
</dbReference>
<dbReference type="DNASU" id="71914"/>
<dbReference type="Ensembl" id="ENSMUST00000031281.14">
    <property type="protein sequence ID" value="ENSMUSP00000031281.10"/>
    <property type="gene ID" value="ENSMUSG00000029338.14"/>
</dbReference>
<dbReference type="GeneID" id="71914"/>
<dbReference type="KEGG" id="mmu:71914"/>
<dbReference type="UCSC" id="uc008yga.1">
    <property type="organism name" value="mouse"/>
</dbReference>
<dbReference type="AGR" id="MGI:1919164"/>
<dbReference type="CTD" id="118429"/>
<dbReference type="MGI" id="MGI:1919164">
    <property type="gene designation" value="Antxr2"/>
</dbReference>
<dbReference type="VEuPathDB" id="HostDB:ENSMUSG00000029338"/>
<dbReference type="eggNOG" id="ENOG502QT7Y">
    <property type="taxonomic scope" value="Eukaryota"/>
</dbReference>
<dbReference type="GeneTree" id="ENSGT00940000156320"/>
<dbReference type="HOGENOM" id="CLU_029760_0_0_1"/>
<dbReference type="InParanoid" id="Q6DFX2"/>
<dbReference type="OMA" id="NFNRVPH"/>
<dbReference type="OrthoDB" id="69748at9989"/>
<dbReference type="PhylomeDB" id="Q6DFX2"/>
<dbReference type="TreeFam" id="TF328943"/>
<dbReference type="BioGRID-ORCS" id="71914">
    <property type="hits" value="1 hit in 80 CRISPR screens"/>
</dbReference>
<dbReference type="ChiTaRS" id="Antxr2">
    <property type="organism name" value="mouse"/>
</dbReference>
<dbReference type="PRO" id="PR:Q6DFX2"/>
<dbReference type="Proteomes" id="UP000000589">
    <property type="component" value="Chromosome 5"/>
</dbReference>
<dbReference type="RNAct" id="Q6DFX2">
    <property type="molecule type" value="protein"/>
</dbReference>
<dbReference type="Bgee" id="ENSMUSG00000029338">
    <property type="expression patterns" value="Expressed in decidua and 206 other cell types or tissues"/>
</dbReference>
<dbReference type="ExpressionAtlas" id="Q6DFX2">
    <property type="expression patterns" value="baseline and differential"/>
</dbReference>
<dbReference type="GO" id="GO:0009986">
    <property type="term" value="C:cell surface"/>
    <property type="evidence" value="ECO:0000314"/>
    <property type="project" value="MGI"/>
</dbReference>
<dbReference type="GO" id="GO:0009897">
    <property type="term" value="C:external side of plasma membrane"/>
    <property type="evidence" value="ECO:0000314"/>
    <property type="project" value="MGI"/>
</dbReference>
<dbReference type="GO" id="GO:0016020">
    <property type="term" value="C:membrane"/>
    <property type="evidence" value="ECO:0000314"/>
    <property type="project" value="MGI"/>
</dbReference>
<dbReference type="GO" id="GO:0046872">
    <property type="term" value="F:metal ion binding"/>
    <property type="evidence" value="ECO:0007669"/>
    <property type="project" value="UniProtKB-KW"/>
</dbReference>
<dbReference type="GO" id="GO:0038023">
    <property type="term" value="F:signaling receptor activity"/>
    <property type="evidence" value="ECO:0007669"/>
    <property type="project" value="InterPro"/>
</dbReference>
<dbReference type="GO" id="GO:0030199">
    <property type="term" value="P:collagen fibril organization"/>
    <property type="evidence" value="ECO:0000315"/>
    <property type="project" value="MGI"/>
</dbReference>
<dbReference type="GO" id="GO:0007338">
    <property type="term" value="P:single fertilization"/>
    <property type="evidence" value="ECO:0000315"/>
    <property type="project" value="MGI"/>
</dbReference>
<dbReference type="GO" id="GO:0060065">
    <property type="term" value="P:uterus development"/>
    <property type="evidence" value="ECO:0000315"/>
    <property type="project" value="MGI"/>
</dbReference>
<dbReference type="CDD" id="cd01474">
    <property type="entry name" value="vWA_ATR"/>
    <property type="match status" value="1"/>
</dbReference>
<dbReference type="FunFam" id="3.40.50.410:FF:000024">
    <property type="entry name" value="Anthrax toxin receptor"/>
    <property type="match status" value="1"/>
</dbReference>
<dbReference type="Gene3D" id="3.40.50.410">
    <property type="entry name" value="von Willebrand factor, type A domain"/>
    <property type="match status" value="1"/>
</dbReference>
<dbReference type="InterPro" id="IPR017360">
    <property type="entry name" value="Anthrax_toxin_rcpt"/>
</dbReference>
<dbReference type="InterPro" id="IPR008399">
    <property type="entry name" value="Anthrax_toxin_rcpt_C"/>
</dbReference>
<dbReference type="InterPro" id="IPR008400">
    <property type="entry name" value="Anthrax_toxin_rcpt_extracel"/>
</dbReference>
<dbReference type="InterPro" id="IPR002035">
    <property type="entry name" value="VWF_A"/>
</dbReference>
<dbReference type="InterPro" id="IPR036465">
    <property type="entry name" value="vWFA_dom_sf"/>
</dbReference>
<dbReference type="PANTHER" id="PTHR16059">
    <property type="entry name" value="ANTHRAX TOXIN RECEPTOR"/>
    <property type="match status" value="1"/>
</dbReference>
<dbReference type="PANTHER" id="PTHR16059:SF13">
    <property type="entry name" value="ANTHRAX TOXIN RECEPTOR 2"/>
    <property type="match status" value="1"/>
</dbReference>
<dbReference type="Pfam" id="PF05586">
    <property type="entry name" value="Ant_C"/>
    <property type="match status" value="1"/>
</dbReference>
<dbReference type="Pfam" id="PF05587">
    <property type="entry name" value="Anth_Ig"/>
    <property type="match status" value="1"/>
</dbReference>
<dbReference type="Pfam" id="PF00092">
    <property type="entry name" value="VWA"/>
    <property type="match status" value="1"/>
</dbReference>
<dbReference type="PIRSF" id="PIRSF038023">
    <property type="entry name" value="Anthrax_toxin_receptor_2"/>
    <property type="match status" value="1"/>
</dbReference>
<dbReference type="SMART" id="SM00327">
    <property type="entry name" value="VWA"/>
    <property type="match status" value="1"/>
</dbReference>
<dbReference type="SUPFAM" id="SSF53300">
    <property type="entry name" value="vWA-like"/>
    <property type="match status" value="1"/>
</dbReference>
<dbReference type="PROSITE" id="PS50234">
    <property type="entry name" value="VWFA"/>
    <property type="match status" value="1"/>
</dbReference>
<proteinExistence type="evidence at protein level"/>
<comment type="function">
    <text evidence="1">Necessary for cellular interactions with laminin and the extracellular matrix.</text>
</comment>
<comment type="subunit">
    <text evidence="1">Binds laminin, and possibly also collagen type IV.</text>
</comment>
<comment type="subcellular location">
    <subcellularLocation>
        <location evidence="1">Membrane</location>
        <topology evidence="2">Single-pass type I membrane protein</topology>
    </subcellularLocation>
</comment>
<comment type="similarity">
    <text evidence="4">Belongs to the ATR family.</text>
</comment>
<name>ANTR2_MOUSE</name>
<keyword id="KW-1015">Disulfide bond</keyword>
<keyword id="KW-0325">Glycoprotein</keyword>
<keyword id="KW-0472">Membrane</keyword>
<keyword id="KW-0479">Metal-binding</keyword>
<keyword id="KW-0597">Phosphoprotein</keyword>
<keyword id="KW-0675">Receptor</keyword>
<keyword id="KW-1185">Reference proteome</keyword>
<keyword id="KW-0732">Signal</keyword>
<keyword id="KW-0812">Transmembrane</keyword>
<keyword id="KW-1133">Transmembrane helix</keyword>
<accession>Q6DFX2</accession>
<accession>Q99L17</accession>
<organism>
    <name type="scientific">Mus musculus</name>
    <name type="common">Mouse</name>
    <dbReference type="NCBI Taxonomy" id="10090"/>
    <lineage>
        <taxon>Eukaryota</taxon>
        <taxon>Metazoa</taxon>
        <taxon>Chordata</taxon>
        <taxon>Craniata</taxon>
        <taxon>Vertebrata</taxon>
        <taxon>Euteleostomi</taxon>
        <taxon>Mammalia</taxon>
        <taxon>Eutheria</taxon>
        <taxon>Euarchontoglires</taxon>
        <taxon>Glires</taxon>
        <taxon>Rodentia</taxon>
        <taxon>Myomorpha</taxon>
        <taxon>Muroidea</taxon>
        <taxon>Muridae</taxon>
        <taxon>Murinae</taxon>
        <taxon>Mus</taxon>
        <taxon>Mus</taxon>
    </lineage>
</organism>
<gene>
    <name type="primary">Antxr2</name>
</gene>
<evidence type="ECO:0000250" key="1">
    <source>
        <dbReference type="UniProtKB" id="P58335"/>
    </source>
</evidence>
<evidence type="ECO:0000255" key="2"/>
<evidence type="ECO:0000255" key="3">
    <source>
        <dbReference type="PROSITE-ProRule" id="PRU00219"/>
    </source>
</evidence>
<evidence type="ECO:0000305" key="4"/>
<protein>
    <recommendedName>
        <fullName>Anthrax toxin receptor 2</fullName>
    </recommendedName>
</protein>
<feature type="signal peptide" evidence="2">
    <location>
        <begin position="1"/>
        <end position="31"/>
    </location>
</feature>
<feature type="chain" id="PRO_0000002695" description="Anthrax toxin receptor 2">
    <location>
        <begin position="32"/>
        <end position="487"/>
    </location>
</feature>
<feature type="topological domain" description="Extracellular" evidence="2">
    <location>
        <begin position="32"/>
        <end position="318"/>
    </location>
</feature>
<feature type="transmembrane region" description="Helical" evidence="2">
    <location>
        <begin position="319"/>
        <end position="339"/>
    </location>
</feature>
<feature type="topological domain" description="Cytoplasmic" evidence="2">
    <location>
        <begin position="340"/>
        <end position="487"/>
    </location>
</feature>
<feature type="domain" description="VWFA" evidence="3">
    <location>
        <begin position="44"/>
        <end position="213"/>
    </location>
</feature>
<feature type="binding site" evidence="1">
    <location>
        <position position="52"/>
    </location>
    <ligand>
        <name>a divalent metal cation</name>
        <dbReference type="ChEBI" id="CHEBI:60240"/>
    </ligand>
</feature>
<feature type="binding site" evidence="1">
    <location>
        <position position="54"/>
    </location>
    <ligand>
        <name>a divalent metal cation</name>
        <dbReference type="ChEBI" id="CHEBI:60240"/>
    </ligand>
</feature>
<feature type="binding site" evidence="1">
    <location>
        <position position="118"/>
    </location>
    <ligand>
        <name>a divalent metal cation</name>
        <dbReference type="ChEBI" id="CHEBI:60240"/>
    </ligand>
</feature>
<feature type="modified residue" description="Phosphothreonine" evidence="1">
    <location>
        <position position="147"/>
    </location>
</feature>
<feature type="glycosylation site" description="N-linked (GlcNAc...) asparagine" evidence="2">
    <location>
        <position position="260"/>
    </location>
</feature>
<feature type="disulfide bond" evidence="1">
    <location>
        <begin position="39"/>
        <end position="218"/>
    </location>
</feature>